<protein>
    <recommendedName>
        <fullName>Lysine-specific demethylase 5C</fullName>
        <ecNumber evidence="2">1.14.11.67</ecNumber>
    </recommendedName>
    <alternativeName>
        <fullName>Histone demethylase JARID1C</fullName>
    </alternativeName>
    <alternativeName>
        <fullName>Jumonji/ARID domain-containing protein 1C</fullName>
    </alternativeName>
    <alternativeName>
        <fullName>Protein SmcX</fullName>
    </alternativeName>
    <alternativeName>
        <fullName>Protein Xe169</fullName>
    </alternativeName>
    <alternativeName>
        <fullName evidence="12">[histone H3]-trimethyl-L-lysine(4) demethylase 5C</fullName>
    </alternativeName>
</protein>
<gene>
    <name type="primary">Kdm5c</name>
    <name type="synonym">Jarid1c</name>
    <name type="synonym">Kiaa0234</name>
    <name type="synonym">Smcx</name>
    <name type="synonym">Xe169</name>
</gene>
<reference key="1">
    <citation type="journal article" date="1999" name="Mamm. Genome">
        <title>Mouse H-Y encoding Smcy gene and its X chromosomal homolog Smcx.</title>
        <authorList>
            <person name="Agulnik A.I."/>
            <person name="Longepied G."/>
            <person name="Ty M.T."/>
            <person name="Bishop C.E."/>
            <person name="Mitchell M.J."/>
        </authorList>
    </citation>
    <scope>NUCLEOTIDE SEQUENCE [MRNA] (ISOFORM 2)</scope>
    <source>
        <strain>129/SvJ</strain>
    </source>
</reference>
<reference key="2">
    <citation type="journal article" date="2005" name="Science">
        <title>The transcriptional landscape of the mammalian genome.</title>
        <authorList>
            <person name="Carninci P."/>
            <person name="Kasukawa T."/>
            <person name="Katayama S."/>
            <person name="Gough J."/>
            <person name="Frith M.C."/>
            <person name="Maeda N."/>
            <person name="Oyama R."/>
            <person name="Ravasi T."/>
            <person name="Lenhard B."/>
            <person name="Wells C."/>
            <person name="Kodzius R."/>
            <person name="Shimokawa K."/>
            <person name="Bajic V.B."/>
            <person name="Brenner S.E."/>
            <person name="Batalov S."/>
            <person name="Forrest A.R."/>
            <person name="Zavolan M."/>
            <person name="Davis M.J."/>
            <person name="Wilming L.G."/>
            <person name="Aidinis V."/>
            <person name="Allen J.E."/>
            <person name="Ambesi-Impiombato A."/>
            <person name="Apweiler R."/>
            <person name="Aturaliya R.N."/>
            <person name="Bailey T.L."/>
            <person name="Bansal M."/>
            <person name="Baxter L."/>
            <person name="Beisel K.W."/>
            <person name="Bersano T."/>
            <person name="Bono H."/>
            <person name="Chalk A.M."/>
            <person name="Chiu K.P."/>
            <person name="Choudhary V."/>
            <person name="Christoffels A."/>
            <person name="Clutterbuck D.R."/>
            <person name="Crowe M.L."/>
            <person name="Dalla E."/>
            <person name="Dalrymple B.P."/>
            <person name="de Bono B."/>
            <person name="Della Gatta G."/>
            <person name="di Bernardo D."/>
            <person name="Down T."/>
            <person name="Engstrom P."/>
            <person name="Fagiolini M."/>
            <person name="Faulkner G."/>
            <person name="Fletcher C.F."/>
            <person name="Fukushima T."/>
            <person name="Furuno M."/>
            <person name="Futaki S."/>
            <person name="Gariboldi M."/>
            <person name="Georgii-Hemming P."/>
            <person name="Gingeras T.R."/>
            <person name="Gojobori T."/>
            <person name="Green R.E."/>
            <person name="Gustincich S."/>
            <person name="Harbers M."/>
            <person name="Hayashi Y."/>
            <person name="Hensch T.K."/>
            <person name="Hirokawa N."/>
            <person name="Hill D."/>
            <person name="Huminiecki L."/>
            <person name="Iacono M."/>
            <person name="Ikeo K."/>
            <person name="Iwama A."/>
            <person name="Ishikawa T."/>
            <person name="Jakt M."/>
            <person name="Kanapin A."/>
            <person name="Katoh M."/>
            <person name="Kawasawa Y."/>
            <person name="Kelso J."/>
            <person name="Kitamura H."/>
            <person name="Kitano H."/>
            <person name="Kollias G."/>
            <person name="Krishnan S.P."/>
            <person name="Kruger A."/>
            <person name="Kummerfeld S.K."/>
            <person name="Kurochkin I.V."/>
            <person name="Lareau L.F."/>
            <person name="Lazarevic D."/>
            <person name="Lipovich L."/>
            <person name="Liu J."/>
            <person name="Liuni S."/>
            <person name="McWilliam S."/>
            <person name="Madan Babu M."/>
            <person name="Madera M."/>
            <person name="Marchionni L."/>
            <person name="Matsuda H."/>
            <person name="Matsuzawa S."/>
            <person name="Miki H."/>
            <person name="Mignone F."/>
            <person name="Miyake S."/>
            <person name="Morris K."/>
            <person name="Mottagui-Tabar S."/>
            <person name="Mulder N."/>
            <person name="Nakano N."/>
            <person name="Nakauchi H."/>
            <person name="Ng P."/>
            <person name="Nilsson R."/>
            <person name="Nishiguchi S."/>
            <person name="Nishikawa S."/>
            <person name="Nori F."/>
            <person name="Ohara O."/>
            <person name="Okazaki Y."/>
            <person name="Orlando V."/>
            <person name="Pang K.C."/>
            <person name="Pavan W.J."/>
            <person name="Pavesi G."/>
            <person name="Pesole G."/>
            <person name="Petrovsky N."/>
            <person name="Piazza S."/>
            <person name="Reed J."/>
            <person name="Reid J.F."/>
            <person name="Ring B.Z."/>
            <person name="Ringwald M."/>
            <person name="Rost B."/>
            <person name="Ruan Y."/>
            <person name="Salzberg S.L."/>
            <person name="Sandelin A."/>
            <person name="Schneider C."/>
            <person name="Schoenbach C."/>
            <person name="Sekiguchi K."/>
            <person name="Semple C.A."/>
            <person name="Seno S."/>
            <person name="Sessa L."/>
            <person name="Sheng Y."/>
            <person name="Shibata Y."/>
            <person name="Shimada H."/>
            <person name="Shimada K."/>
            <person name="Silva D."/>
            <person name="Sinclair B."/>
            <person name="Sperling S."/>
            <person name="Stupka E."/>
            <person name="Sugiura K."/>
            <person name="Sultana R."/>
            <person name="Takenaka Y."/>
            <person name="Taki K."/>
            <person name="Tammoja K."/>
            <person name="Tan S.L."/>
            <person name="Tang S."/>
            <person name="Taylor M.S."/>
            <person name="Tegner J."/>
            <person name="Teichmann S.A."/>
            <person name="Ueda H.R."/>
            <person name="van Nimwegen E."/>
            <person name="Verardo R."/>
            <person name="Wei C.L."/>
            <person name="Yagi K."/>
            <person name="Yamanishi H."/>
            <person name="Zabarovsky E."/>
            <person name="Zhu S."/>
            <person name="Zimmer A."/>
            <person name="Hide W."/>
            <person name="Bult C."/>
            <person name="Grimmond S.M."/>
            <person name="Teasdale R.D."/>
            <person name="Liu E.T."/>
            <person name="Brusic V."/>
            <person name="Quackenbush J."/>
            <person name="Wahlestedt C."/>
            <person name="Mattick J.S."/>
            <person name="Hume D.A."/>
            <person name="Kai C."/>
            <person name="Sasaki D."/>
            <person name="Tomaru Y."/>
            <person name="Fukuda S."/>
            <person name="Kanamori-Katayama M."/>
            <person name="Suzuki M."/>
            <person name="Aoki J."/>
            <person name="Arakawa T."/>
            <person name="Iida J."/>
            <person name="Imamura K."/>
            <person name="Itoh M."/>
            <person name="Kato T."/>
            <person name="Kawaji H."/>
            <person name="Kawagashira N."/>
            <person name="Kawashima T."/>
            <person name="Kojima M."/>
            <person name="Kondo S."/>
            <person name="Konno H."/>
            <person name="Nakano K."/>
            <person name="Ninomiya N."/>
            <person name="Nishio T."/>
            <person name="Okada M."/>
            <person name="Plessy C."/>
            <person name="Shibata K."/>
            <person name="Shiraki T."/>
            <person name="Suzuki S."/>
            <person name="Tagami M."/>
            <person name="Waki K."/>
            <person name="Watahiki A."/>
            <person name="Okamura-Oho Y."/>
            <person name="Suzuki H."/>
            <person name="Kawai J."/>
            <person name="Hayashizaki Y."/>
        </authorList>
    </citation>
    <scope>NUCLEOTIDE SEQUENCE [LARGE SCALE MRNA] (ISOFORM 2)</scope>
    <source>
        <strain>C57BL/6J</strain>
        <strain>NOD</strain>
        <tissue>Dendritic cell</tissue>
        <tissue>Embryo</tissue>
        <tissue>Inner ear</tissue>
        <tissue>Small intestine</tissue>
    </source>
</reference>
<reference key="3">
    <citation type="journal article" date="2004" name="Genome Res.">
        <title>The status, quality, and expansion of the NIH full-length cDNA project: the Mammalian Gene Collection (MGC).</title>
        <authorList>
            <consortium name="The MGC Project Team"/>
        </authorList>
    </citation>
    <scope>NUCLEOTIDE SEQUENCE [LARGE SCALE MRNA] (ISOFORM 3)</scope>
    <source>
        <strain>C57BL/6J</strain>
        <tissue>Brain</tissue>
    </source>
</reference>
<reference key="4">
    <citation type="journal article" date="1994" name="Hum. Mol. Genet.">
        <title>A novel X gene with a widely transcribed Y-linked homologue escapes X-inactivation in mouse and human.</title>
        <authorList>
            <person name="Agulnik A.I."/>
            <person name="Mitchell M.J."/>
            <person name="Mattei M.-G."/>
            <person name="Borsani G."/>
            <person name="Avner P.A."/>
            <person name="Lerner J.L."/>
            <person name="Bishop C.E."/>
        </authorList>
    </citation>
    <scope>NUCLEOTIDE SEQUENCE [MRNA] OF 36-1068</scope>
    <source>
        <strain>BALB/cJ</strain>
        <tissue>Testis</tissue>
    </source>
</reference>
<reference key="5">
    <citation type="journal article" date="2003" name="DNA Res.">
        <title>Prediction of the coding sequences of mouse homologues of KIAA gene: III. The complete nucleotide sequences of 500 mouse KIAA-homologous cDNAs identified by screening of terminal sequences of cDNA clones randomly sampled from size-fractionated libraries.</title>
        <authorList>
            <person name="Okazaki N."/>
            <person name="Kikuno R."/>
            <person name="Ohara R."/>
            <person name="Inamoto S."/>
            <person name="Koseki H."/>
            <person name="Hiraoka S."/>
            <person name="Saga Y."/>
            <person name="Nagase T."/>
            <person name="Ohara O."/>
            <person name="Koga H."/>
        </authorList>
    </citation>
    <scope>NUCLEOTIDE SEQUENCE [LARGE SCALE MRNA] OF 165-1554 (ISOFORM 1)</scope>
    <source>
        <tissue>Embryonic tail</tissue>
    </source>
</reference>
<reference key="6">
    <citation type="journal article" date="1994" name="Nat. Genet.">
        <title>The murine Xe169 gene escapes X-inactivation like its human homologue.</title>
        <authorList>
            <person name="Wu J."/>
            <person name="Salido E."/>
            <person name="Yen P."/>
            <person name="Mohandas T."/>
            <person name="Shapiro L.J."/>
        </authorList>
    </citation>
    <scope>NUCLEOTIDE SEQUENCE [MRNA] OF 1206-1385 (ISOFORM 1)</scope>
</reference>
<reference key="7">
    <citation type="journal article" date="1998" name="Nature">
        <title>A proposed path by which genes common to mammalian X and Y chromosomes evolve to become X inactivated.</title>
        <authorList>
            <person name="Jegalian K.G."/>
            <person name="Page D.C."/>
        </authorList>
    </citation>
    <scope>NUCLEOTIDE SEQUENCE [MRNA] OF 1-39</scope>
</reference>
<reference key="8">
    <citation type="journal article" date="1995" name="Nature">
        <title>Identification of a mouse male-specific transplantation antigen, H-Y.</title>
        <authorList>
            <person name="Scott D.M."/>
            <person name="Ehrmann I.E."/>
            <person name="Ellis P.S."/>
            <person name="Bishop C.E."/>
            <person name="Agulnik A.I."/>
            <person name="Simpson E."/>
            <person name="Mitchell M.J."/>
        </authorList>
    </citation>
    <scope>FUNCTION</scope>
    <source>
        <strain>C3H/HeJ</strain>
    </source>
</reference>
<reference key="9">
    <citation type="journal article" date="2010" name="Cell">
        <title>A tissue-specific atlas of mouse protein phosphorylation and expression.</title>
        <authorList>
            <person name="Huttlin E.L."/>
            <person name="Jedrychowski M.P."/>
            <person name="Elias J.E."/>
            <person name="Goswami T."/>
            <person name="Rad R."/>
            <person name="Beausoleil S.A."/>
            <person name="Villen J."/>
            <person name="Haas W."/>
            <person name="Sowa M.E."/>
            <person name="Gygi S.P."/>
        </authorList>
    </citation>
    <scope>PHOSPHORYLATION [LARGE SCALE ANALYSIS] AT SER-317 AND SER-893</scope>
    <scope>IDENTIFICATION BY MASS SPECTROMETRY [LARGE SCALE ANALYSIS]</scope>
    <source>
        <tissue>Brain</tissue>
        <tissue>Brown adipose tissue</tissue>
        <tissue>Kidney</tissue>
        <tissue>Pancreas</tissue>
        <tissue>Spleen</tissue>
        <tissue>Testis</tissue>
    </source>
</reference>
<reference key="10">
    <citation type="journal article" date="2011" name="Science">
        <title>Histone lysine demethylase JARID1a activates CLOCK-BMAL1 and influences the circadian clock.</title>
        <authorList>
            <person name="DiTacchio L."/>
            <person name="Le H.D."/>
            <person name="Vollmers C."/>
            <person name="Hatori M."/>
            <person name="Witcher M."/>
            <person name="Secombe J."/>
            <person name="Panda S."/>
        </authorList>
    </citation>
    <scope>FUNCTION</scope>
</reference>
<proteinExistence type="evidence at protein level"/>
<feature type="chain" id="PRO_0000200587" description="Lysine-specific demethylase 5C">
    <location>
        <begin position="1"/>
        <end position="1554"/>
    </location>
</feature>
<feature type="domain" description="JmjN" evidence="5">
    <location>
        <begin position="14"/>
        <end position="55"/>
    </location>
</feature>
<feature type="domain" description="ARID" evidence="4">
    <location>
        <begin position="79"/>
        <end position="169"/>
    </location>
</feature>
<feature type="domain" description="JmjC" evidence="6">
    <location>
        <begin position="468"/>
        <end position="634"/>
    </location>
</feature>
<feature type="zinc finger region" description="PHD-type 1" evidence="3">
    <location>
        <begin position="326"/>
        <end position="372"/>
    </location>
</feature>
<feature type="zinc finger region" description="PHD-type 2" evidence="3">
    <location>
        <begin position="1187"/>
        <end position="1248"/>
    </location>
</feature>
<feature type="region of interest" description="Disordered" evidence="7">
    <location>
        <begin position="197"/>
        <end position="227"/>
    </location>
</feature>
<feature type="region of interest" description="Disordered" evidence="7">
    <location>
        <begin position="284"/>
        <end position="303"/>
    </location>
</feature>
<feature type="region of interest" description="Disordered" evidence="7">
    <location>
        <begin position="1319"/>
        <end position="1364"/>
    </location>
</feature>
<feature type="region of interest" description="Disordered" evidence="7">
    <location>
        <begin position="1437"/>
        <end position="1535"/>
    </location>
</feature>
<feature type="compositionally biased region" description="Polar residues" evidence="7">
    <location>
        <begin position="197"/>
        <end position="207"/>
    </location>
</feature>
<feature type="compositionally biased region" description="Basic residues" evidence="7">
    <location>
        <begin position="1442"/>
        <end position="1457"/>
    </location>
</feature>
<feature type="compositionally biased region" description="Basic and acidic residues" evidence="7">
    <location>
        <begin position="1458"/>
        <end position="1475"/>
    </location>
</feature>
<feature type="compositionally biased region" description="Acidic residues" evidence="7">
    <location>
        <begin position="1482"/>
        <end position="1497"/>
    </location>
</feature>
<feature type="binding site" evidence="6">
    <location>
        <position position="514"/>
    </location>
    <ligand>
        <name>Fe cation</name>
        <dbReference type="ChEBI" id="CHEBI:24875"/>
        <note>catalytic</note>
    </ligand>
</feature>
<feature type="binding site" evidence="6">
    <location>
        <position position="517"/>
    </location>
    <ligand>
        <name>Fe cation</name>
        <dbReference type="ChEBI" id="CHEBI:24875"/>
        <note>catalytic</note>
    </ligand>
</feature>
<feature type="binding site" evidence="6">
    <location>
        <position position="602"/>
    </location>
    <ligand>
        <name>Fe cation</name>
        <dbReference type="ChEBI" id="CHEBI:24875"/>
        <note>catalytic</note>
    </ligand>
</feature>
<feature type="modified residue" description="Phosphoserine" evidence="2">
    <location>
        <position position="287"/>
    </location>
</feature>
<feature type="modified residue" description="Phosphoserine" evidence="2">
    <location>
        <position position="301"/>
    </location>
</feature>
<feature type="modified residue" description="Phosphoserine" evidence="13">
    <location>
        <position position="317"/>
    </location>
</feature>
<feature type="modified residue" description="Phosphoserine" evidence="13">
    <location>
        <position position="893"/>
    </location>
</feature>
<feature type="modified residue" description="Phosphoserine" evidence="2">
    <location>
        <position position="897"/>
    </location>
</feature>
<feature type="modified residue" description="Phosphoserine" evidence="2">
    <location>
        <position position="1353"/>
    </location>
</feature>
<feature type="cross-link" description="Glycyl lysine isopeptide (Lys-Gly) (interchain with G-Cter in SUMO2)" evidence="2">
    <location>
        <position position="205"/>
    </location>
</feature>
<feature type="cross-link" description="Glycyl lysine isopeptide (Lys-Gly) (interchain with G-Cter in SUMO2)" evidence="2">
    <location>
        <position position="229"/>
    </location>
</feature>
<feature type="cross-link" description="Glycyl lysine isopeptide (Lys-Gly) (interchain with G-Cter in SUMO2)" evidence="2">
    <location>
        <position position="244"/>
    </location>
</feature>
<feature type="cross-link" description="Glycyl lysine isopeptide (Lys-Gly) (interchain with G-Cter in SUMO2)" evidence="2">
    <location>
        <position position="274"/>
    </location>
</feature>
<feature type="cross-link" description="Glycyl lysine isopeptide (Lys-Gly) (interchain with G-Cter in SUMO2)" evidence="2">
    <location>
        <position position="295"/>
    </location>
</feature>
<feature type="cross-link" description="Glycyl lysine isopeptide (Lys-Gly) (interchain with G-Cter in SUMO2)" evidence="2">
    <location>
        <position position="1127"/>
    </location>
</feature>
<feature type="splice variant" id="VSP_026411" description="In isoform 3." evidence="10">
    <location>
        <begin position="77"/>
        <end position="117"/>
    </location>
</feature>
<feature type="splice variant" id="VSP_000316" description="In isoform 2 and isoform 3." evidence="9 10 11">
    <location>
        <begin position="1364"/>
        <end position="1366"/>
    </location>
</feature>
<feature type="sequence conflict" description="In Ref. 7; AAB96762." evidence="12" ref="7">
    <original>L</original>
    <variation>M</variation>
    <location>
        <position position="3"/>
    </location>
</feature>
<feature type="sequence conflict" description="In Ref. 7; AAB96762." evidence="12" ref="7">
    <original>D</original>
    <variation>G</variation>
    <location>
        <position position="26"/>
    </location>
</feature>
<feature type="sequence conflict" description="In Ref. 2; BAE33161/BAE33260." evidence="12" ref="2">
    <original>G</original>
    <variation>S</variation>
    <location>
        <position position="123"/>
    </location>
</feature>
<feature type="sequence conflict" description="In Ref. 2; BAE34464." evidence="12" ref="2">
    <original>G</original>
    <variation>D</variation>
    <location>
        <position position="249"/>
    </location>
</feature>
<feature type="sequence conflict" description="In Ref. 5; BAC97906." evidence="12" ref="5">
    <original>D</original>
    <variation>N</variation>
    <location>
        <position position="726"/>
    </location>
</feature>
<feature type="sequence conflict" description="In Ref. 1; AAD53049 and 4; CAA82759." evidence="12" ref="1 4">
    <original>C</original>
    <variation>L</variation>
    <location>
        <position position="865"/>
    </location>
</feature>
<feature type="sequence conflict" description="In Ref. 4; CAA82759." evidence="12" ref="4">
    <original>L</original>
    <variation>P</variation>
    <location>
        <position position="1068"/>
    </location>
</feature>
<feature type="sequence conflict" description="In Ref. 2; BAE33367." evidence="12" ref="2">
    <original>Y</original>
    <variation>C</variation>
    <location>
        <position position="1126"/>
    </location>
</feature>
<dbReference type="EC" id="1.14.11.67" evidence="2"/>
<dbReference type="EMBL" id="AF127245">
    <property type="protein sequence ID" value="AAD53049.1"/>
    <property type="molecule type" value="mRNA"/>
</dbReference>
<dbReference type="EMBL" id="AK008105">
    <property type="protein sequence ID" value="BAB25462.1"/>
    <property type="molecule type" value="mRNA"/>
</dbReference>
<dbReference type="EMBL" id="AK155279">
    <property type="protein sequence ID" value="BAE33161.1"/>
    <property type="molecule type" value="mRNA"/>
</dbReference>
<dbReference type="EMBL" id="AK155427">
    <property type="protein sequence ID" value="BAE33260.1"/>
    <property type="molecule type" value="mRNA"/>
</dbReference>
<dbReference type="EMBL" id="AK155651">
    <property type="protein sequence ID" value="BAE33367.1"/>
    <property type="molecule type" value="mRNA"/>
</dbReference>
<dbReference type="EMBL" id="AK158340">
    <property type="protein sequence ID" value="BAE34464.1"/>
    <property type="molecule type" value="mRNA"/>
</dbReference>
<dbReference type="EMBL" id="AK011577">
    <property type="status" value="NOT_ANNOTATED_CDS"/>
    <property type="molecule type" value="mRNA"/>
</dbReference>
<dbReference type="EMBL" id="BC043096">
    <property type="protein sequence ID" value="AAH43096.1"/>
    <property type="molecule type" value="mRNA"/>
</dbReference>
<dbReference type="EMBL" id="BC054550">
    <property type="protein sequence ID" value="AAH54550.1"/>
    <property type="molecule type" value="mRNA"/>
</dbReference>
<dbReference type="EMBL" id="Z29651">
    <property type="protein sequence ID" value="CAA82759.1"/>
    <property type="molecule type" value="mRNA"/>
</dbReference>
<dbReference type="EMBL" id="AK129096">
    <property type="protein sequence ID" value="BAC97906.1"/>
    <property type="molecule type" value="mRNA"/>
</dbReference>
<dbReference type="EMBL" id="L29563">
    <property type="protein sequence ID" value="AAA62384.1"/>
    <property type="molecule type" value="mRNA"/>
</dbReference>
<dbReference type="EMBL" id="AF039894">
    <property type="protein sequence ID" value="AAB96762.1"/>
    <property type="molecule type" value="mRNA"/>
</dbReference>
<dbReference type="CCDS" id="CCDS41178.1">
    <molecule id="P41230-2"/>
</dbReference>
<dbReference type="PIR" id="I48775">
    <property type="entry name" value="I48775"/>
</dbReference>
<dbReference type="PIR" id="I84689">
    <property type="entry name" value="I84689"/>
</dbReference>
<dbReference type="RefSeq" id="NP_001390000.1">
    <molecule id="P41230-1"/>
    <property type="nucleotide sequence ID" value="NM_001403071.1"/>
</dbReference>
<dbReference type="RefSeq" id="NP_001390002.1">
    <molecule id="P41230-3"/>
    <property type="nucleotide sequence ID" value="NM_001403073.1"/>
</dbReference>
<dbReference type="RefSeq" id="NP_038696.2">
    <molecule id="P41230-2"/>
    <property type="nucleotide sequence ID" value="NM_013668.5"/>
</dbReference>
<dbReference type="RefSeq" id="XP_006528832.1">
    <property type="nucleotide sequence ID" value="XM_006528769.3"/>
</dbReference>
<dbReference type="RefSeq" id="XP_006528835.1">
    <property type="nucleotide sequence ID" value="XM_006528772.3"/>
</dbReference>
<dbReference type="BMRB" id="P41230"/>
<dbReference type="SMR" id="P41230"/>
<dbReference type="BioGRID" id="203341">
    <property type="interactions" value="5"/>
</dbReference>
<dbReference type="FunCoup" id="P41230">
    <property type="interactions" value="4509"/>
</dbReference>
<dbReference type="IntAct" id="P41230">
    <property type="interactions" value="2"/>
</dbReference>
<dbReference type="MINT" id="P41230"/>
<dbReference type="STRING" id="10090.ENSMUSP00000108207"/>
<dbReference type="GlyGen" id="P41230">
    <property type="glycosylation" value="1 site, 1 N-linked glycan (1 site)"/>
</dbReference>
<dbReference type="iPTMnet" id="P41230"/>
<dbReference type="PhosphoSitePlus" id="P41230"/>
<dbReference type="jPOST" id="P41230"/>
<dbReference type="PaxDb" id="10090-ENSMUSP00000108203"/>
<dbReference type="PeptideAtlas" id="P41230"/>
<dbReference type="ProteomicsDB" id="269290">
    <molecule id="P41230-1"/>
</dbReference>
<dbReference type="ProteomicsDB" id="269291">
    <molecule id="P41230-2"/>
</dbReference>
<dbReference type="ProteomicsDB" id="269292">
    <molecule id="P41230-3"/>
</dbReference>
<dbReference type="Pumba" id="P41230"/>
<dbReference type="Antibodypedia" id="26540">
    <property type="antibodies" value="222 antibodies from 32 providers"/>
</dbReference>
<dbReference type="DNASU" id="20591"/>
<dbReference type="Ensembl" id="ENSMUST00000082177.13">
    <molecule id="P41230-3"/>
    <property type="protein sequence ID" value="ENSMUSP00000080814.7"/>
    <property type="gene ID" value="ENSMUSG00000025332.15"/>
</dbReference>
<dbReference type="Ensembl" id="ENSMUST00000112584.8">
    <molecule id="P41230-1"/>
    <property type="protein sequence ID" value="ENSMUSP00000108203.2"/>
    <property type="gene ID" value="ENSMUSG00000025332.15"/>
</dbReference>
<dbReference type="Ensembl" id="ENSMUST00000112588.9">
    <molecule id="P41230-2"/>
    <property type="protein sequence ID" value="ENSMUSP00000108207.3"/>
    <property type="gene ID" value="ENSMUSG00000025332.15"/>
</dbReference>
<dbReference type="GeneID" id="20591"/>
<dbReference type="KEGG" id="mmu:20591"/>
<dbReference type="UCSC" id="uc009uqc.3">
    <molecule id="P41230-2"/>
    <property type="organism name" value="mouse"/>
</dbReference>
<dbReference type="UCSC" id="uc009uqd.3">
    <molecule id="P41230-3"/>
    <property type="organism name" value="mouse"/>
</dbReference>
<dbReference type="UCSC" id="uc009uqe.3">
    <molecule id="P41230-1"/>
    <property type="organism name" value="mouse"/>
</dbReference>
<dbReference type="AGR" id="MGI:99781"/>
<dbReference type="CTD" id="8242"/>
<dbReference type="MGI" id="MGI:99781">
    <property type="gene designation" value="Kdm5c"/>
</dbReference>
<dbReference type="VEuPathDB" id="HostDB:ENSMUSG00000025332"/>
<dbReference type="eggNOG" id="KOG1246">
    <property type="taxonomic scope" value="Eukaryota"/>
</dbReference>
<dbReference type="GeneTree" id="ENSGT00940000161236"/>
<dbReference type="HOGENOM" id="CLU_000991_2_2_1"/>
<dbReference type="InParanoid" id="P41230"/>
<dbReference type="OMA" id="FMIRCEL"/>
<dbReference type="OrthoDB" id="1678912at2759"/>
<dbReference type="PhylomeDB" id="P41230"/>
<dbReference type="TreeFam" id="TF106476"/>
<dbReference type="Reactome" id="R-MMU-3214842">
    <property type="pathway name" value="HDMs demethylate histones"/>
</dbReference>
<dbReference type="BioGRID-ORCS" id="20591">
    <property type="hits" value="11 hits in 85 CRISPR screens"/>
</dbReference>
<dbReference type="ChiTaRS" id="Kdm5c">
    <property type="organism name" value="mouse"/>
</dbReference>
<dbReference type="PRO" id="PR:P41230"/>
<dbReference type="Proteomes" id="UP000000589">
    <property type="component" value="Chromosome X"/>
</dbReference>
<dbReference type="RNAct" id="P41230">
    <property type="molecule type" value="protein"/>
</dbReference>
<dbReference type="Bgee" id="ENSMUSG00000025332">
    <property type="expression patterns" value="Expressed in epithelium of lens and 238 other cell types or tissues"/>
</dbReference>
<dbReference type="ExpressionAtlas" id="P41230">
    <property type="expression patterns" value="baseline and differential"/>
</dbReference>
<dbReference type="GO" id="GO:0005737">
    <property type="term" value="C:cytoplasm"/>
    <property type="evidence" value="ECO:0000266"/>
    <property type="project" value="MGI"/>
</dbReference>
<dbReference type="GO" id="GO:0005634">
    <property type="term" value="C:nucleus"/>
    <property type="evidence" value="ECO:0000314"/>
    <property type="project" value="MGI"/>
</dbReference>
<dbReference type="GO" id="GO:0003677">
    <property type="term" value="F:DNA binding"/>
    <property type="evidence" value="ECO:0007669"/>
    <property type="project" value="InterPro"/>
</dbReference>
<dbReference type="GO" id="GO:0032453">
    <property type="term" value="F:histone H3K4 demethylase activity"/>
    <property type="evidence" value="ECO:0000314"/>
    <property type="project" value="MGI"/>
</dbReference>
<dbReference type="GO" id="GO:0034647">
    <property type="term" value="F:histone H3K4me/H3K4me2/H3K4me3 demethylase activity"/>
    <property type="evidence" value="ECO:0007669"/>
    <property type="project" value="UniProtKB-EC"/>
</dbReference>
<dbReference type="GO" id="GO:0042802">
    <property type="term" value="F:identical protein binding"/>
    <property type="evidence" value="ECO:0000266"/>
    <property type="project" value="MGI"/>
</dbReference>
<dbReference type="GO" id="GO:0061629">
    <property type="term" value="F:RNA polymerase II-specific DNA-binding transcription factor binding"/>
    <property type="evidence" value="ECO:0000266"/>
    <property type="project" value="MGI"/>
</dbReference>
<dbReference type="GO" id="GO:0008270">
    <property type="term" value="F:zinc ion binding"/>
    <property type="evidence" value="ECO:0007669"/>
    <property type="project" value="UniProtKB-KW"/>
</dbReference>
<dbReference type="GO" id="GO:0045892">
    <property type="term" value="P:negative regulation of DNA-templated transcription"/>
    <property type="evidence" value="ECO:0000314"/>
    <property type="project" value="UniProtKB"/>
</dbReference>
<dbReference type="GO" id="GO:0000122">
    <property type="term" value="P:negative regulation of transcription by RNA polymerase II"/>
    <property type="evidence" value="ECO:0000266"/>
    <property type="project" value="MGI"/>
</dbReference>
<dbReference type="GO" id="GO:0042752">
    <property type="term" value="P:regulation of circadian rhythm"/>
    <property type="evidence" value="ECO:0000303"/>
    <property type="project" value="UniProtKB"/>
</dbReference>
<dbReference type="GO" id="GO:0048511">
    <property type="term" value="P:rhythmic process"/>
    <property type="evidence" value="ECO:0007669"/>
    <property type="project" value="UniProtKB-KW"/>
</dbReference>
<dbReference type="CDD" id="cd16875">
    <property type="entry name" value="ARID_KDM5C_5D"/>
    <property type="match status" value="1"/>
</dbReference>
<dbReference type="CDD" id="cd15604">
    <property type="entry name" value="PHD1_KDM5C_5D"/>
    <property type="match status" value="1"/>
</dbReference>
<dbReference type="FunFam" id="3.30.40.10:FF:000072">
    <property type="entry name" value="lysine-specific demethylase 5C isoform X2"/>
    <property type="match status" value="1"/>
</dbReference>
<dbReference type="FunFam" id="2.60.120.650:FF:000041">
    <property type="entry name" value="lysine-specific demethylase 5C isoform X6"/>
    <property type="match status" value="1"/>
</dbReference>
<dbReference type="FunFam" id="3.30.40.10:FF:000651">
    <property type="entry name" value="Lysine-specific demethylase 5D"/>
    <property type="match status" value="1"/>
</dbReference>
<dbReference type="FunFam" id="1.10.150.60:FF:000001">
    <property type="entry name" value="Putative lysine-specific demethylase 5b"/>
    <property type="match status" value="1"/>
</dbReference>
<dbReference type="FunFam" id="2.60.120.650:FF:000001">
    <property type="entry name" value="Putative lysine-specific demethylase 5b"/>
    <property type="match status" value="1"/>
</dbReference>
<dbReference type="Gene3D" id="1.10.150.60">
    <property type="entry name" value="ARID DNA-binding domain"/>
    <property type="match status" value="1"/>
</dbReference>
<dbReference type="Gene3D" id="2.60.120.650">
    <property type="entry name" value="Cupin"/>
    <property type="match status" value="1"/>
</dbReference>
<dbReference type="Gene3D" id="3.30.40.10">
    <property type="entry name" value="Zinc/RING finger domain, C3HC4 (zinc finger)"/>
    <property type="match status" value="2"/>
</dbReference>
<dbReference type="InterPro" id="IPR001606">
    <property type="entry name" value="ARID_dom"/>
</dbReference>
<dbReference type="InterPro" id="IPR036431">
    <property type="entry name" value="ARID_dom_sf"/>
</dbReference>
<dbReference type="InterPro" id="IPR003347">
    <property type="entry name" value="JmjC_dom"/>
</dbReference>
<dbReference type="InterPro" id="IPR003349">
    <property type="entry name" value="JmjN"/>
</dbReference>
<dbReference type="InterPro" id="IPR048615">
    <property type="entry name" value="KDM5_C-hel"/>
</dbReference>
<dbReference type="InterPro" id="IPR013637">
    <property type="entry name" value="Lys_sp_deMease-like_dom"/>
</dbReference>
<dbReference type="InterPro" id="IPR019786">
    <property type="entry name" value="Zinc_finger_PHD-type_CS"/>
</dbReference>
<dbReference type="InterPro" id="IPR004198">
    <property type="entry name" value="Znf_C5HC2"/>
</dbReference>
<dbReference type="InterPro" id="IPR011011">
    <property type="entry name" value="Znf_FYVE_PHD"/>
</dbReference>
<dbReference type="InterPro" id="IPR001965">
    <property type="entry name" value="Znf_PHD"/>
</dbReference>
<dbReference type="InterPro" id="IPR019787">
    <property type="entry name" value="Znf_PHD-finger"/>
</dbReference>
<dbReference type="InterPro" id="IPR013083">
    <property type="entry name" value="Znf_RING/FYVE/PHD"/>
</dbReference>
<dbReference type="PANTHER" id="PTHR10694">
    <property type="entry name" value="LYSINE-SPECIFIC DEMETHYLASE"/>
    <property type="match status" value="1"/>
</dbReference>
<dbReference type="PANTHER" id="PTHR10694:SF43">
    <property type="entry name" value="LYSINE-SPECIFIC DEMETHYLASE 5C"/>
    <property type="match status" value="1"/>
</dbReference>
<dbReference type="Pfam" id="PF01388">
    <property type="entry name" value="ARID"/>
    <property type="match status" value="1"/>
</dbReference>
<dbReference type="Pfam" id="PF02373">
    <property type="entry name" value="JmjC"/>
    <property type="match status" value="1"/>
</dbReference>
<dbReference type="Pfam" id="PF02375">
    <property type="entry name" value="JmjN"/>
    <property type="match status" value="1"/>
</dbReference>
<dbReference type="Pfam" id="PF21323">
    <property type="entry name" value="KDM5_C-hel"/>
    <property type="match status" value="1"/>
</dbReference>
<dbReference type="Pfam" id="PF00628">
    <property type="entry name" value="PHD"/>
    <property type="match status" value="1"/>
</dbReference>
<dbReference type="Pfam" id="PF08429">
    <property type="entry name" value="PLU-1"/>
    <property type="match status" value="1"/>
</dbReference>
<dbReference type="Pfam" id="PF02928">
    <property type="entry name" value="zf-C5HC2"/>
    <property type="match status" value="1"/>
</dbReference>
<dbReference type="SMART" id="SM01014">
    <property type="entry name" value="ARID"/>
    <property type="match status" value="1"/>
</dbReference>
<dbReference type="SMART" id="SM00501">
    <property type="entry name" value="BRIGHT"/>
    <property type="match status" value="1"/>
</dbReference>
<dbReference type="SMART" id="SM00558">
    <property type="entry name" value="JmjC"/>
    <property type="match status" value="1"/>
</dbReference>
<dbReference type="SMART" id="SM00545">
    <property type="entry name" value="JmjN"/>
    <property type="match status" value="1"/>
</dbReference>
<dbReference type="SMART" id="SM00249">
    <property type="entry name" value="PHD"/>
    <property type="match status" value="2"/>
</dbReference>
<dbReference type="SUPFAM" id="SSF46774">
    <property type="entry name" value="ARID-like"/>
    <property type="match status" value="1"/>
</dbReference>
<dbReference type="SUPFAM" id="SSF51197">
    <property type="entry name" value="Clavaminate synthase-like"/>
    <property type="match status" value="1"/>
</dbReference>
<dbReference type="SUPFAM" id="SSF57903">
    <property type="entry name" value="FYVE/PHD zinc finger"/>
    <property type="match status" value="2"/>
</dbReference>
<dbReference type="PROSITE" id="PS51011">
    <property type="entry name" value="ARID"/>
    <property type="match status" value="1"/>
</dbReference>
<dbReference type="PROSITE" id="PS51184">
    <property type="entry name" value="JMJC"/>
    <property type="match status" value="1"/>
</dbReference>
<dbReference type="PROSITE" id="PS51183">
    <property type="entry name" value="JMJN"/>
    <property type="match status" value="1"/>
</dbReference>
<dbReference type="PROSITE" id="PS01359">
    <property type="entry name" value="ZF_PHD_1"/>
    <property type="match status" value="2"/>
</dbReference>
<dbReference type="PROSITE" id="PS50016">
    <property type="entry name" value="ZF_PHD_2"/>
    <property type="match status" value="1"/>
</dbReference>
<organism>
    <name type="scientific">Mus musculus</name>
    <name type="common">Mouse</name>
    <dbReference type="NCBI Taxonomy" id="10090"/>
    <lineage>
        <taxon>Eukaryota</taxon>
        <taxon>Metazoa</taxon>
        <taxon>Chordata</taxon>
        <taxon>Craniata</taxon>
        <taxon>Vertebrata</taxon>
        <taxon>Euteleostomi</taxon>
        <taxon>Mammalia</taxon>
        <taxon>Eutheria</taxon>
        <taxon>Euarchontoglires</taxon>
        <taxon>Glires</taxon>
        <taxon>Rodentia</taxon>
        <taxon>Myomorpha</taxon>
        <taxon>Muroidea</taxon>
        <taxon>Muridae</taxon>
        <taxon>Murinae</taxon>
        <taxon>Mus</taxon>
        <taxon>Mus</taxon>
    </lineage>
</organism>
<name>KDM5C_MOUSE</name>
<accession>P41230</accession>
<accession>O54995</accession>
<accession>Q3TYU8</accession>
<accession>Q3U1X6</accession>
<accession>Q3U282</accession>
<accession>Q6ZQF8</accession>
<accession>Q80XQ9</accession>
<accession>Q9CVI4</accession>
<accession>Q9D0C3</accession>
<accession>Q9QVR8</accession>
<accession>Q9R039</accession>
<comment type="function">
    <text evidence="2 8">Histone demethylase that specifically demethylates 'Lys-4' of histone H3, thereby playing a central role in histone code. Does not demethylate histone H3 'Lys-9', H3 'Lys-27', H3 'Lys-36', H3 'Lys-79' or H4 'Lys-20'. Demethylates trimethylated and dimethylated but not monomethylated H3 'Lys-4'. Participates in transcriptional repression of neuronal genes by recruiting histone deacetylases and REST at neuron-restrictive silencer elements (By similarity). Represses the CLOCK-BMAL1 heterodimer-mediated transcriptional activation of the core clock component PER2.</text>
</comment>
<comment type="catalytic activity">
    <reaction evidence="2">
        <text>N(6),N(6),N(6)-trimethyl-L-lysyl(4)-[histone H3] + 3 2-oxoglutarate + 3 O2 = L-lysyl(4)-[histone H3] + 3 formaldehyde + 3 succinate + 3 CO2</text>
        <dbReference type="Rhea" id="RHEA:60208"/>
        <dbReference type="Rhea" id="RHEA-COMP:15537"/>
        <dbReference type="Rhea" id="RHEA-COMP:15547"/>
        <dbReference type="ChEBI" id="CHEBI:15379"/>
        <dbReference type="ChEBI" id="CHEBI:16526"/>
        <dbReference type="ChEBI" id="CHEBI:16810"/>
        <dbReference type="ChEBI" id="CHEBI:16842"/>
        <dbReference type="ChEBI" id="CHEBI:29969"/>
        <dbReference type="ChEBI" id="CHEBI:30031"/>
        <dbReference type="ChEBI" id="CHEBI:61961"/>
        <dbReference type="EC" id="1.14.11.67"/>
    </reaction>
</comment>
<comment type="cofactor">
    <cofactor evidence="2">
        <name>Fe(2+)</name>
        <dbReference type="ChEBI" id="CHEBI:29033"/>
    </cofactor>
    <text evidence="2">Binds 1 Fe(2+) ion per subunit.</text>
</comment>
<comment type="subunit">
    <text evidence="2">Part of two distinct complexes, one containing E2F6, and the other containing REST. Interacts with ZMYND8.</text>
</comment>
<comment type="subcellular location">
    <subcellularLocation>
        <location evidence="4 5">Nucleus</location>
    </subcellularLocation>
</comment>
<comment type="alternative products">
    <event type="alternative splicing"/>
    <isoform>
        <id>P41230-1</id>
        <name>1</name>
        <sequence type="displayed"/>
    </isoform>
    <isoform>
        <id>P41230-2</id>
        <name>2</name>
        <sequence type="described" ref="VSP_000316"/>
    </isoform>
    <isoform>
        <id>P41230-3</id>
        <name>3</name>
        <sequence type="described" ref="VSP_026411 VSP_000316"/>
    </isoform>
</comment>
<comment type="domain">
    <text evidence="1">The first PHD-type zinc finger domain recognizes and binds H3-K9Me3.</text>
</comment>
<comment type="domain">
    <text evidence="1">Both the JmjC domain and the JmjN domain are required for enzymatic activity.</text>
</comment>
<comment type="miscellaneous">
    <text>Escapes X-inactivation.</text>
</comment>
<comment type="similarity">
    <text evidence="12">Belongs to the JARID1 histone demethylase family.</text>
</comment>
<evidence type="ECO:0000250" key="1"/>
<evidence type="ECO:0000250" key="2">
    <source>
        <dbReference type="UniProtKB" id="P41229"/>
    </source>
</evidence>
<evidence type="ECO:0000255" key="3">
    <source>
        <dbReference type="PROSITE-ProRule" id="PRU00146"/>
    </source>
</evidence>
<evidence type="ECO:0000255" key="4">
    <source>
        <dbReference type="PROSITE-ProRule" id="PRU00355"/>
    </source>
</evidence>
<evidence type="ECO:0000255" key="5">
    <source>
        <dbReference type="PROSITE-ProRule" id="PRU00537"/>
    </source>
</evidence>
<evidence type="ECO:0000255" key="6">
    <source>
        <dbReference type="PROSITE-ProRule" id="PRU00538"/>
    </source>
</evidence>
<evidence type="ECO:0000256" key="7">
    <source>
        <dbReference type="SAM" id="MobiDB-lite"/>
    </source>
</evidence>
<evidence type="ECO:0000269" key="8">
    <source>
    </source>
</evidence>
<evidence type="ECO:0000303" key="9">
    <source>
    </source>
</evidence>
<evidence type="ECO:0000303" key="10">
    <source>
    </source>
</evidence>
<evidence type="ECO:0000303" key="11">
    <source>
    </source>
</evidence>
<evidence type="ECO:0000305" key="12"/>
<evidence type="ECO:0007744" key="13">
    <source>
    </source>
</evidence>
<sequence length="1554" mass="175313">MELGSDDFLPPPECPVFEPSWAEFRDPLGYIAKIRPIAEKSGICKIRPPADWQPPFAVEVDNFRFTPRIQRLNELEAQTRVKLNYLDQIAKFWEIQGSSLKIPNVERRILDLYSLSKIVVEEGGYETICKDRRWARVAQRLNYPPGKNIGSLLRSHYERIVYPYEMYQSGANLVQCNTRPFDNEEKDKEYKPHSIPLRQSVQPSKFNSYGRRAKRLQPDPEPTEEDIEKNPELKKLQIYGAGPKMMGLGLMAKDKTLRKKDKEGPECPPTVVVKEELGGDVKMESTSPKTFLEGKEELSHSPEPCTKMTMRLRRNHSNAQFIESYVCRMCSRGDEDDKLLLCDGCDDNYHIFCLLPPLPEIPKGVWRCPKCVMAECKRPPEAFGFEQATREYTLQSFGEMADSFKADYFNMPVHMVPTELVEKEFWRLVNSIEEDVTVEYGADIHSKEFGSGFPVSDSKRHLTPEEEEYATSGWNLNVMPVLEQSVLCHINADISGMKVPWLYVGMVFSAFCWHIEDHWSYSINYLHWGEPKTWYGVPSLAAEHLEEVMKKLTPELFDSQPDLLHQLVTLMNPNTLMSHGVPVVRTNQCAGEFVITFPRAYHSGFNQGYNFAEAVNFCTADWLPAGRQCIEHYRRLRRYCVFSHEELICKMAACPEKLDLNLAAAVHKEMFIMVQEERRLRKALLEKGITEAEREAFELLPDDERQCIKCKTTCFLSALACYDCPDGLVCLSHINDLCKCSSSRQYLRYRYTLDELPAMLHKLKVRAESFDTWANKVRVALEVEDGRKRSLEELRALESEARERRFPNSELLQRLKNCLSEAEACVSRALGLVSGQEAGPDRVAGLQMTLAELRDFLGQMNNLPCAMHQIGDVKGILEQVEAYQTEAREALVSQPSSPGLLQSLLERGQQLGVEVPEAQQLQRQVEQARWLDEVKRTLAPSARRGTLAIMRGLLVAGASVAPSPAVDKAQAELQELLTIAERWEEKAHLCLEARQKHPPATLEAIIHEAENIPVHLPNIQSLKEALAKARAWIADVDEIQNGDHYPCLDDLEGLVAVGRDLPVGLEELRQLELQVLTAHSWREKASKTFLKKNSCYTLLEVLCPCADAGSDSTKRSRWMEKELGLYKSDTELLGLSAQDLRDPGSVIVAFKEGEQKEKEGILQLRRTNSAKPSPLALLTTASSTASICVCGQVPAGVGALQCDLCQDWFHGRCVTVPRLLSSQRSSLPSSPLLAWWEWDTKFLCPLCMRSRRPRLETILALLVALQRLPVRLPEGEALQCLTERAISWQGRARQVLASEEVTALLGRLAELRQRLQAESKPEESLAYPSDGGEGTGNMPKVQGLLENGDSVTSPEKVATEEGSGKRDLELLSSILPQLSGPVLELPEATRAPLEELMMEGDLLEVTLDENHSIWQLLQAGQPPDLKRVQTLLELEKAERHGSRTRGRALERRRRRKVDRGGEPDDPAREELEPKRVRSSGPEAEEVQEEEELEEETGGEVPPVPFPNSGSPSIQEDQDGLEPVLEAGSDTSAPFSTLTSRLLMSCPQQPSLQQL</sequence>
<keyword id="KW-0025">Alternative splicing</keyword>
<keyword id="KW-0090">Biological rhythms</keyword>
<keyword id="KW-0156">Chromatin regulator</keyword>
<keyword id="KW-0223">Dioxygenase</keyword>
<keyword id="KW-0408">Iron</keyword>
<keyword id="KW-1017">Isopeptide bond</keyword>
<keyword id="KW-0479">Metal-binding</keyword>
<keyword id="KW-0539">Nucleus</keyword>
<keyword id="KW-0560">Oxidoreductase</keyword>
<keyword id="KW-0597">Phosphoprotein</keyword>
<keyword id="KW-1185">Reference proteome</keyword>
<keyword id="KW-0677">Repeat</keyword>
<keyword id="KW-0678">Repressor</keyword>
<keyword id="KW-0804">Transcription</keyword>
<keyword id="KW-0805">Transcription regulation</keyword>
<keyword id="KW-0832">Ubl conjugation</keyword>
<keyword id="KW-0862">Zinc</keyword>
<keyword id="KW-0863">Zinc-finger</keyword>